<organism>
    <name type="scientific">Escherichia coli O1:K1 / APEC</name>
    <dbReference type="NCBI Taxonomy" id="405955"/>
    <lineage>
        <taxon>Bacteria</taxon>
        <taxon>Pseudomonadati</taxon>
        <taxon>Pseudomonadota</taxon>
        <taxon>Gammaproteobacteria</taxon>
        <taxon>Enterobacterales</taxon>
        <taxon>Enterobacteriaceae</taxon>
        <taxon>Escherichia</taxon>
    </lineage>
</organism>
<gene>
    <name evidence="1" type="primary">tsaD</name>
    <name type="synonym">gcp</name>
    <name type="ordered locus">Ecok1_30820</name>
    <name type="ORF">APECO1_3350</name>
</gene>
<dbReference type="EC" id="2.3.1.234" evidence="1"/>
<dbReference type="EMBL" id="CP000468">
    <property type="protein sequence ID" value="ABJ02576.1"/>
    <property type="molecule type" value="Genomic_DNA"/>
</dbReference>
<dbReference type="RefSeq" id="WP_001264377.1">
    <property type="nucleotide sequence ID" value="NZ_CADILS010000003.1"/>
</dbReference>
<dbReference type="SMR" id="A1AFY6"/>
<dbReference type="KEGG" id="ecv:APECO1_3350"/>
<dbReference type="HOGENOM" id="CLU_023208_0_2_6"/>
<dbReference type="Proteomes" id="UP000008216">
    <property type="component" value="Chromosome"/>
</dbReference>
<dbReference type="GO" id="GO:0005737">
    <property type="term" value="C:cytoplasm"/>
    <property type="evidence" value="ECO:0007669"/>
    <property type="project" value="UniProtKB-SubCell"/>
</dbReference>
<dbReference type="GO" id="GO:0005506">
    <property type="term" value="F:iron ion binding"/>
    <property type="evidence" value="ECO:0007669"/>
    <property type="project" value="UniProtKB-UniRule"/>
</dbReference>
<dbReference type="GO" id="GO:0061711">
    <property type="term" value="F:N(6)-L-threonylcarbamoyladenine synthase activity"/>
    <property type="evidence" value="ECO:0007669"/>
    <property type="project" value="UniProtKB-EC"/>
</dbReference>
<dbReference type="GO" id="GO:0002949">
    <property type="term" value="P:tRNA threonylcarbamoyladenosine modification"/>
    <property type="evidence" value="ECO:0007669"/>
    <property type="project" value="UniProtKB-UniRule"/>
</dbReference>
<dbReference type="CDD" id="cd24097">
    <property type="entry name" value="ASKHA_NBD_TsaD-like"/>
    <property type="match status" value="1"/>
</dbReference>
<dbReference type="FunFam" id="3.30.420.40:FF:000031">
    <property type="entry name" value="tRNA N6-adenosine threonylcarbamoyltransferase"/>
    <property type="match status" value="1"/>
</dbReference>
<dbReference type="Gene3D" id="3.30.420.40">
    <property type="match status" value="2"/>
</dbReference>
<dbReference type="HAMAP" id="MF_01445">
    <property type="entry name" value="TsaD"/>
    <property type="match status" value="1"/>
</dbReference>
<dbReference type="InterPro" id="IPR043129">
    <property type="entry name" value="ATPase_NBD"/>
</dbReference>
<dbReference type="InterPro" id="IPR000905">
    <property type="entry name" value="Gcp-like_dom"/>
</dbReference>
<dbReference type="InterPro" id="IPR017861">
    <property type="entry name" value="KAE1/TsaD"/>
</dbReference>
<dbReference type="InterPro" id="IPR017860">
    <property type="entry name" value="Peptidase_M22_CS"/>
</dbReference>
<dbReference type="InterPro" id="IPR022450">
    <property type="entry name" value="TsaD"/>
</dbReference>
<dbReference type="NCBIfam" id="TIGR00329">
    <property type="entry name" value="gcp_kae1"/>
    <property type="match status" value="1"/>
</dbReference>
<dbReference type="NCBIfam" id="TIGR03723">
    <property type="entry name" value="T6A_TsaD_YgjD"/>
    <property type="match status" value="1"/>
</dbReference>
<dbReference type="PANTHER" id="PTHR11735">
    <property type="entry name" value="TRNA N6-ADENOSINE THREONYLCARBAMOYLTRANSFERASE"/>
    <property type="match status" value="1"/>
</dbReference>
<dbReference type="PANTHER" id="PTHR11735:SF6">
    <property type="entry name" value="TRNA N6-ADENOSINE THREONYLCARBAMOYLTRANSFERASE, MITOCHONDRIAL"/>
    <property type="match status" value="1"/>
</dbReference>
<dbReference type="Pfam" id="PF00814">
    <property type="entry name" value="TsaD"/>
    <property type="match status" value="1"/>
</dbReference>
<dbReference type="PRINTS" id="PR00789">
    <property type="entry name" value="OSIALOPTASE"/>
</dbReference>
<dbReference type="SUPFAM" id="SSF53067">
    <property type="entry name" value="Actin-like ATPase domain"/>
    <property type="match status" value="1"/>
</dbReference>
<dbReference type="PROSITE" id="PS01016">
    <property type="entry name" value="GLYCOPROTEASE"/>
    <property type="match status" value="1"/>
</dbReference>
<sequence>MRVLGIETSCDETGIAIYDDEKGLLANQLYSQVKLHADYGGVVPELASRDHVRKTVPLIQEALKESGLTAKDIDAVAYTAGPGLVGALLVGATVGRSLAFAWDVPAIPVHHMEGHLLAPMLEDNPPEFPFVALLVSGGHTQLISVTGIGQYELLGESIDDAAGEAFDKTAKLLGLDYPGGPLLSKMAAQGTAGRFVFPRPMTDRPGLDFSFSGLKTFAANTIRDNGTDDQTRADIARAFEDAVVDTLMIKCKRALDQTGFKRLVMAGGVSANRTLRAKLAEMMKKRRGEVFYARPEFCTDNGAMIAYAGMVRFKAGATADLGVSVRPRWPLAELPAA</sequence>
<proteinExistence type="inferred from homology"/>
<protein>
    <recommendedName>
        <fullName evidence="1">tRNA N6-adenosine threonylcarbamoyltransferase</fullName>
        <ecNumber evidence="1">2.3.1.234</ecNumber>
    </recommendedName>
    <alternativeName>
        <fullName evidence="1">N6-L-threonylcarbamoyladenine synthase</fullName>
        <shortName evidence="1">t(6)A synthase</shortName>
    </alternativeName>
    <alternativeName>
        <fullName evidence="1">t(6)A37 threonylcarbamoyladenosine biosynthesis protein TsaD</fullName>
    </alternativeName>
    <alternativeName>
        <fullName evidence="1">tRNA threonylcarbamoyladenosine biosynthesis protein TsaD</fullName>
    </alternativeName>
</protein>
<accession>A1AFY6</accession>
<reference key="1">
    <citation type="journal article" date="2007" name="J. Bacteriol.">
        <title>The genome sequence of avian pathogenic Escherichia coli strain O1:K1:H7 shares strong similarities with human extraintestinal pathogenic E. coli genomes.</title>
        <authorList>
            <person name="Johnson T.J."/>
            <person name="Kariyawasam S."/>
            <person name="Wannemuehler Y."/>
            <person name="Mangiamele P."/>
            <person name="Johnson S.J."/>
            <person name="Doetkott C."/>
            <person name="Skyberg J.A."/>
            <person name="Lynne A.M."/>
            <person name="Johnson J.R."/>
            <person name="Nolan L.K."/>
        </authorList>
    </citation>
    <scope>NUCLEOTIDE SEQUENCE [LARGE SCALE GENOMIC DNA]</scope>
</reference>
<evidence type="ECO:0000255" key="1">
    <source>
        <dbReference type="HAMAP-Rule" id="MF_01445"/>
    </source>
</evidence>
<keyword id="KW-0012">Acyltransferase</keyword>
<keyword id="KW-0963">Cytoplasm</keyword>
<keyword id="KW-0408">Iron</keyword>
<keyword id="KW-0479">Metal-binding</keyword>
<keyword id="KW-1185">Reference proteome</keyword>
<keyword id="KW-0808">Transferase</keyword>
<keyword id="KW-0819">tRNA processing</keyword>
<feature type="chain" id="PRO_0000303360" description="tRNA N6-adenosine threonylcarbamoyltransferase">
    <location>
        <begin position="1"/>
        <end position="337"/>
    </location>
</feature>
<feature type="binding site" evidence="1">
    <location>
        <position position="111"/>
    </location>
    <ligand>
        <name>Fe cation</name>
        <dbReference type="ChEBI" id="CHEBI:24875"/>
    </ligand>
</feature>
<feature type="binding site" evidence="1">
    <location>
        <position position="115"/>
    </location>
    <ligand>
        <name>Fe cation</name>
        <dbReference type="ChEBI" id="CHEBI:24875"/>
    </ligand>
</feature>
<feature type="binding site" evidence="1">
    <location>
        <begin position="134"/>
        <end position="138"/>
    </location>
    <ligand>
        <name>substrate</name>
    </ligand>
</feature>
<feature type="binding site" evidence="1">
    <location>
        <position position="167"/>
    </location>
    <ligand>
        <name>substrate</name>
    </ligand>
</feature>
<feature type="binding site" evidence="1">
    <location>
        <position position="180"/>
    </location>
    <ligand>
        <name>substrate</name>
    </ligand>
</feature>
<feature type="binding site" evidence="1">
    <location>
        <position position="272"/>
    </location>
    <ligand>
        <name>substrate</name>
    </ligand>
</feature>
<feature type="binding site" evidence="1">
    <location>
        <position position="300"/>
    </location>
    <ligand>
        <name>Fe cation</name>
        <dbReference type="ChEBI" id="CHEBI:24875"/>
    </ligand>
</feature>
<comment type="function">
    <text evidence="1">Required for the formation of a threonylcarbamoyl group on adenosine at position 37 (t(6)A37) in tRNAs that read codons beginning with adenine. Is involved in the transfer of the threonylcarbamoyl moiety of threonylcarbamoyl-AMP (TC-AMP) to the N6 group of A37, together with TsaE and TsaB. TsaD likely plays a direct catalytic role in this reaction.</text>
</comment>
<comment type="catalytic activity">
    <reaction evidence="1">
        <text>L-threonylcarbamoyladenylate + adenosine(37) in tRNA = N(6)-L-threonylcarbamoyladenosine(37) in tRNA + AMP + H(+)</text>
        <dbReference type="Rhea" id="RHEA:37059"/>
        <dbReference type="Rhea" id="RHEA-COMP:10162"/>
        <dbReference type="Rhea" id="RHEA-COMP:10163"/>
        <dbReference type="ChEBI" id="CHEBI:15378"/>
        <dbReference type="ChEBI" id="CHEBI:73682"/>
        <dbReference type="ChEBI" id="CHEBI:74411"/>
        <dbReference type="ChEBI" id="CHEBI:74418"/>
        <dbReference type="ChEBI" id="CHEBI:456215"/>
        <dbReference type="EC" id="2.3.1.234"/>
    </reaction>
</comment>
<comment type="cofactor">
    <cofactor evidence="1">
        <name>Fe(2+)</name>
        <dbReference type="ChEBI" id="CHEBI:29033"/>
    </cofactor>
    <text evidence="1">Binds 1 Fe(2+) ion per subunit.</text>
</comment>
<comment type="subcellular location">
    <subcellularLocation>
        <location evidence="1">Cytoplasm</location>
    </subcellularLocation>
</comment>
<comment type="similarity">
    <text evidence="1">Belongs to the KAE1 / TsaD family.</text>
</comment>
<name>TSAD_ECOK1</name>